<feature type="chain" id="PRO_0000066983" description="Caskin-2">
    <location>
        <begin position="1"/>
        <end position="1202"/>
    </location>
</feature>
<feature type="repeat" description="ANK 1">
    <location>
        <begin position="48"/>
        <end position="77"/>
    </location>
</feature>
<feature type="repeat" description="ANK 2">
    <location>
        <begin position="81"/>
        <end position="110"/>
    </location>
</feature>
<feature type="repeat" description="ANK 3">
    <location>
        <begin position="114"/>
        <end position="143"/>
    </location>
</feature>
<feature type="repeat" description="ANK 4">
    <location>
        <begin position="147"/>
        <end position="176"/>
    </location>
</feature>
<feature type="repeat" description="ANK 5">
    <location>
        <begin position="188"/>
        <end position="217"/>
    </location>
</feature>
<feature type="repeat" description="ANK 6">
    <location>
        <begin position="220"/>
        <end position="249"/>
    </location>
</feature>
<feature type="domain" description="SH3" evidence="4">
    <location>
        <begin position="281"/>
        <end position="347"/>
    </location>
</feature>
<feature type="domain" description="SAM 1" evidence="3">
    <location>
        <begin position="489"/>
        <end position="552"/>
    </location>
</feature>
<feature type="domain" description="SAM 2" evidence="3">
    <location>
        <begin position="558"/>
        <end position="622"/>
    </location>
</feature>
<feature type="region of interest" description="Disordered" evidence="5">
    <location>
        <begin position="355"/>
        <end position="460"/>
    </location>
</feature>
<feature type="region of interest" description="Disordered" evidence="5">
    <location>
        <begin position="676"/>
        <end position="1104"/>
    </location>
</feature>
<feature type="region of interest" description="Disordered" evidence="5">
    <location>
        <begin position="1116"/>
        <end position="1181"/>
    </location>
</feature>
<feature type="compositionally biased region" description="Polar residues" evidence="5">
    <location>
        <begin position="415"/>
        <end position="425"/>
    </location>
</feature>
<feature type="compositionally biased region" description="Basic and acidic residues" evidence="5">
    <location>
        <begin position="731"/>
        <end position="740"/>
    </location>
</feature>
<feature type="compositionally biased region" description="Pro residues" evidence="5">
    <location>
        <begin position="765"/>
        <end position="774"/>
    </location>
</feature>
<feature type="compositionally biased region" description="Pro residues" evidence="5">
    <location>
        <begin position="913"/>
        <end position="923"/>
    </location>
</feature>
<feature type="compositionally biased region" description="Low complexity" evidence="5">
    <location>
        <begin position="940"/>
        <end position="949"/>
    </location>
</feature>
<feature type="compositionally biased region" description="Pro residues" evidence="5">
    <location>
        <begin position="966"/>
        <end position="978"/>
    </location>
</feature>
<feature type="compositionally biased region" description="Pro residues" evidence="5">
    <location>
        <begin position="1018"/>
        <end position="1030"/>
    </location>
</feature>
<feature type="compositionally biased region" description="Low complexity" evidence="5">
    <location>
        <begin position="1031"/>
        <end position="1051"/>
    </location>
</feature>
<feature type="compositionally biased region" description="Pro residues" evidence="5">
    <location>
        <begin position="1052"/>
        <end position="1068"/>
    </location>
</feature>
<feature type="compositionally biased region" description="Pro residues" evidence="5">
    <location>
        <begin position="1124"/>
        <end position="1133"/>
    </location>
</feature>
<feature type="compositionally biased region" description="Polar residues" evidence="5">
    <location>
        <begin position="1135"/>
        <end position="1151"/>
    </location>
</feature>
<feature type="compositionally biased region" description="Basic and acidic residues" evidence="5">
    <location>
        <begin position="1161"/>
        <end position="1172"/>
    </location>
</feature>
<feature type="modified residue" description="Phosphotyrosine" evidence="15">
    <location>
        <position position="253"/>
    </location>
</feature>
<feature type="modified residue" description="Phosphoserine" evidence="15">
    <location>
        <position position="358"/>
    </location>
</feature>
<feature type="modified residue" description="Phosphoserine" evidence="12 14 15">
    <location>
        <position position="393"/>
    </location>
</feature>
<feature type="modified residue" description="Phosphoserine" evidence="12 13 14 15">
    <location>
        <position position="396"/>
    </location>
</feature>
<feature type="modified residue" description="Phosphoserine" evidence="16">
    <location>
        <position position="403"/>
    </location>
</feature>
<feature type="modified residue" description="Phosphoserine" evidence="16">
    <location>
        <position position="406"/>
    </location>
</feature>
<feature type="modified residue" description="Phosphoserine" evidence="2">
    <location>
        <position position="409"/>
    </location>
</feature>
<feature type="modified residue" description="Phosphoserine" evidence="12 13 15">
    <location>
        <position position="471"/>
    </location>
</feature>
<feature type="modified residue" description="Phosphoserine" evidence="15">
    <location>
        <position position="725"/>
    </location>
</feature>
<feature type="modified residue" description="Phosphoserine" evidence="12 15">
    <location>
        <position position="858"/>
    </location>
</feature>
<feature type="modified residue" description="Phosphoserine" evidence="2">
    <location>
        <position position="877"/>
    </location>
</feature>
<feature type="modified residue" description="Phosphoserine" evidence="15">
    <location>
        <position position="878"/>
    </location>
</feature>
<feature type="modified residue" description="Phosphoserine" evidence="12 15">
    <location>
        <position position="892"/>
    </location>
</feature>
<feature type="splice variant" id="VSP_040568" description="In isoform 2." evidence="10">
    <location>
        <begin position="1"/>
        <end position="82"/>
    </location>
</feature>
<feature type="sequence variant" id="VAR_060244" description="In dbSNP:rs7503373." evidence="6 7 8 9 12 15">
    <original>E</original>
    <variation>G</variation>
    <location>
        <position position="891"/>
    </location>
</feature>
<feature type="sequence conflict" description="In Ref. 2; BAH14307." evidence="11" ref="2">
    <original>A</original>
    <variation>G</variation>
    <location>
        <position position="640"/>
    </location>
</feature>
<feature type="sequence conflict" description="In Ref. 2; BAH14307." evidence="11" ref="2">
    <original>L</original>
    <variation>P</variation>
    <location>
        <position position="1093"/>
    </location>
</feature>
<feature type="strand" evidence="17">
    <location>
        <begin position="284"/>
        <end position="290"/>
    </location>
</feature>
<feature type="strand" evidence="17">
    <location>
        <begin position="308"/>
        <end position="312"/>
    </location>
</feature>
<feature type="strand" evidence="17">
    <location>
        <begin position="320"/>
        <end position="324"/>
    </location>
</feature>
<feature type="strand" evidence="17">
    <location>
        <begin position="335"/>
        <end position="337"/>
    </location>
</feature>
<feature type="helix" evidence="17">
    <location>
        <begin position="339"/>
        <end position="341"/>
    </location>
</feature>
<feature type="strand" evidence="17">
    <location>
        <begin position="342"/>
        <end position="345"/>
    </location>
</feature>
<feature type="helix" evidence="18">
    <location>
        <begin position="490"/>
        <end position="499"/>
    </location>
</feature>
<feature type="turn" evidence="18">
    <location>
        <begin position="500"/>
        <end position="502"/>
    </location>
</feature>
<feature type="helix" evidence="19">
    <location>
        <begin position="504"/>
        <end position="506"/>
    </location>
</feature>
<feature type="helix" evidence="18">
    <location>
        <begin position="507"/>
        <end position="512"/>
    </location>
</feature>
<feature type="helix" evidence="18">
    <location>
        <begin position="517"/>
        <end position="520"/>
    </location>
</feature>
<feature type="helix" evidence="18">
    <location>
        <begin position="525"/>
        <end position="530"/>
    </location>
</feature>
<feature type="helix" evidence="18">
    <location>
        <begin position="536"/>
        <end position="547"/>
    </location>
</feature>
<feature type="turn" evidence="18">
    <location>
        <begin position="555"/>
        <end position="558"/>
    </location>
</feature>
<feature type="helix" evidence="18">
    <location>
        <begin position="563"/>
        <end position="569"/>
    </location>
</feature>
<feature type="helix" evidence="18">
    <location>
        <begin position="573"/>
        <end position="575"/>
    </location>
</feature>
<feature type="helix" evidence="18">
    <location>
        <begin position="576"/>
        <end position="581"/>
    </location>
</feature>
<feature type="helix" evidence="18">
    <location>
        <begin position="587"/>
        <end position="590"/>
    </location>
</feature>
<feature type="helix" evidence="18">
    <location>
        <begin position="595"/>
        <end position="597"/>
    </location>
</feature>
<feature type="helix" evidence="18">
    <location>
        <begin position="598"/>
        <end position="601"/>
    </location>
</feature>
<feature type="helix" evidence="18">
    <location>
        <begin position="606"/>
        <end position="624"/>
    </location>
</feature>
<feature type="helix" evidence="20">
    <location>
        <begin position="1182"/>
        <end position="1200"/>
    </location>
</feature>
<dbReference type="EMBL" id="AF451976">
    <property type="protein sequence ID" value="AAL49757.1"/>
    <property type="molecule type" value="mRNA"/>
</dbReference>
<dbReference type="EMBL" id="AK300354">
    <property type="protein sequence ID" value="BAG62095.1"/>
    <property type="molecule type" value="mRNA"/>
</dbReference>
<dbReference type="EMBL" id="AK315936">
    <property type="protein sequence ID" value="BAH14307.1"/>
    <property type="molecule type" value="mRNA"/>
</dbReference>
<dbReference type="EMBL" id="AC100787">
    <property type="status" value="NOT_ANNOTATED_CDS"/>
    <property type="molecule type" value="Genomic_DNA"/>
</dbReference>
<dbReference type="EMBL" id="BC066643">
    <property type="protein sequence ID" value="AAH66643.1"/>
    <property type="molecule type" value="mRNA"/>
</dbReference>
<dbReference type="EMBL" id="AB032965">
    <property type="protein sequence ID" value="BAA86453.1"/>
    <property type="molecule type" value="mRNA"/>
</dbReference>
<dbReference type="CCDS" id="CCDS11723.1">
    <molecule id="Q8WXE0-1"/>
</dbReference>
<dbReference type="CCDS" id="CCDS45775.1">
    <molecule id="Q8WXE0-2"/>
</dbReference>
<dbReference type="RefSeq" id="NP_001136115.1">
    <molecule id="Q8WXE0-2"/>
    <property type="nucleotide sequence ID" value="NM_001142643.3"/>
</dbReference>
<dbReference type="RefSeq" id="NP_065804.2">
    <molecule id="Q8WXE0-1"/>
    <property type="nucleotide sequence ID" value="NM_020753.5"/>
</dbReference>
<dbReference type="RefSeq" id="XP_047292415.1">
    <molecule id="Q8WXE0-1"/>
    <property type="nucleotide sequence ID" value="XM_047436459.1"/>
</dbReference>
<dbReference type="PDB" id="2KE9">
    <property type="method" value="NMR"/>
    <property type="chains" value="A=284-348"/>
</dbReference>
<dbReference type="PDB" id="4IS7">
    <property type="method" value="X-ray"/>
    <property type="resolution" value="2.75 A"/>
    <property type="chains" value="A=483-633"/>
</dbReference>
<dbReference type="PDB" id="5L1M">
    <property type="method" value="X-ray"/>
    <property type="resolution" value="2.75 A"/>
    <property type="chains" value="A=483-633"/>
</dbReference>
<dbReference type="PDB" id="7ZW4">
    <property type="method" value="X-ray"/>
    <property type="resolution" value="2.72 A"/>
    <property type="chains" value="B=1178-1202"/>
</dbReference>
<dbReference type="PDBsum" id="2KE9"/>
<dbReference type="PDBsum" id="4IS7"/>
<dbReference type="PDBsum" id="5L1M"/>
<dbReference type="PDBsum" id="7ZW4"/>
<dbReference type="BMRB" id="Q8WXE0"/>
<dbReference type="SMR" id="Q8WXE0"/>
<dbReference type="BioGRID" id="121577">
    <property type="interactions" value="55"/>
</dbReference>
<dbReference type="FunCoup" id="Q8WXE0">
    <property type="interactions" value="608"/>
</dbReference>
<dbReference type="IntAct" id="Q8WXE0">
    <property type="interactions" value="16"/>
</dbReference>
<dbReference type="MINT" id="Q8WXE0"/>
<dbReference type="STRING" id="9606.ENSP00000325355"/>
<dbReference type="GlyCosmos" id="Q8WXE0">
    <property type="glycosylation" value="1 site, 1 glycan"/>
</dbReference>
<dbReference type="GlyGen" id="Q8WXE0">
    <property type="glycosylation" value="7 sites, 1 O-linked glycan (1 site)"/>
</dbReference>
<dbReference type="iPTMnet" id="Q8WXE0"/>
<dbReference type="PhosphoSitePlus" id="Q8WXE0"/>
<dbReference type="SwissPalm" id="Q8WXE0"/>
<dbReference type="BioMuta" id="CASKIN2"/>
<dbReference type="DMDM" id="296434467"/>
<dbReference type="jPOST" id="Q8WXE0"/>
<dbReference type="MassIVE" id="Q8WXE0"/>
<dbReference type="PaxDb" id="9606-ENSP00000325355"/>
<dbReference type="PeptideAtlas" id="Q8WXE0"/>
<dbReference type="ProteomicsDB" id="75016">
    <molecule id="Q8WXE0-1"/>
</dbReference>
<dbReference type="ProteomicsDB" id="75017">
    <molecule id="Q8WXE0-2"/>
</dbReference>
<dbReference type="Pumba" id="Q8WXE0"/>
<dbReference type="Antibodypedia" id="53193">
    <property type="antibodies" value="167 antibodies from 26 providers"/>
</dbReference>
<dbReference type="DNASU" id="57513"/>
<dbReference type="Ensembl" id="ENST00000321617.8">
    <molecule id="Q8WXE0-1"/>
    <property type="protein sequence ID" value="ENSP00000325355.3"/>
    <property type="gene ID" value="ENSG00000177303.10"/>
</dbReference>
<dbReference type="Ensembl" id="ENST00000433559.6">
    <molecule id="Q8WXE0-2"/>
    <property type="protein sequence ID" value="ENSP00000406963.2"/>
    <property type="gene ID" value="ENSG00000177303.10"/>
</dbReference>
<dbReference type="GeneID" id="57513"/>
<dbReference type="KEGG" id="hsa:57513"/>
<dbReference type="MANE-Select" id="ENST00000321617.8">
    <property type="protein sequence ID" value="ENSP00000325355.3"/>
    <property type="RefSeq nucleotide sequence ID" value="NM_020753.5"/>
    <property type="RefSeq protein sequence ID" value="NP_065804.2"/>
</dbReference>
<dbReference type="UCSC" id="uc002joc.5">
    <molecule id="Q8WXE0-1"/>
    <property type="organism name" value="human"/>
</dbReference>
<dbReference type="AGR" id="HGNC:18200"/>
<dbReference type="CTD" id="57513"/>
<dbReference type="DisGeNET" id="57513"/>
<dbReference type="GeneCards" id="CASKIN2"/>
<dbReference type="HGNC" id="HGNC:18200">
    <property type="gene designation" value="CASKIN2"/>
</dbReference>
<dbReference type="HPA" id="ENSG00000177303">
    <property type="expression patterns" value="Low tissue specificity"/>
</dbReference>
<dbReference type="MIM" id="612185">
    <property type="type" value="gene"/>
</dbReference>
<dbReference type="neXtProt" id="NX_Q8WXE0"/>
<dbReference type="OpenTargets" id="ENSG00000177303"/>
<dbReference type="PharmGKB" id="PA134944093"/>
<dbReference type="VEuPathDB" id="HostDB:ENSG00000177303"/>
<dbReference type="eggNOG" id="KOG0507">
    <property type="taxonomic scope" value="Eukaryota"/>
</dbReference>
<dbReference type="eggNOG" id="KOG4384">
    <property type="taxonomic scope" value="Eukaryota"/>
</dbReference>
<dbReference type="GeneTree" id="ENSGT00940000158256"/>
<dbReference type="HOGENOM" id="CLU_003619_2_0_1"/>
<dbReference type="InParanoid" id="Q8WXE0"/>
<dbReference type="OrthoDB" id="6156898at2759"/>
<dbReference type="PAN-GO" id="Q8WXE0">
    <property type="GO annotations" value="1 GO annotation based on evolutionary models"/>
</dbReference>
<dbReference type="PhylomeDB" id="Q8WXE0"/>
<dbReference type="TreeFam" id="TF320582"/>
<dbReference type="PathwayCommons" id="Q8WXE0"/>
<dbReference type="SignaLink" id="Q8WXE0"/>
<dbReference type="BioGRID-ORCS" id="57513">
    <property type="hits" value="14 hits in 1154 CRISPR screens"/>
</dbReference>
<dbReference type="ChiTaRS" id="CASKIN2">
    <property type="organism name" value="human"/>
</dbReference>
<dbReference type="EvolutionaryTrace" id="Q8WXE0"/>
<dbReference type="GenomeRNAi" id="57513"/>
<dbReference type="Pharos" id="Q8WXE0">
    <property type="development level" value="Tdark"/>
</dbReference>
<dbReference type="PRO" id="PR:Q8WXE0"/>
<dbReference type="Proteomes" id="UP000005640">
    <property type="component" value="Chromosome 17"/>
</dbReference>
<dbReference type="RNAct" id="Q8WXE0">
    <property type="molecule type" value="protein"/>
</dbReference>
<dbReference type="Bgee" id="ENSG00000177303">
    <property type="expression patterns" value="Expressed in olfactory bulb and 180 other cell types or tissues"/>
</dbReference>
<dbReference type="ExpressionAtlas" id="Q8WXE0">
    <property type="expression patterns" value="baseline and differential"/>
</dbReference>
<dbReference type="GO" id="GO:0005737">
    <property type="term" value="C:cytoplasm"/>
    <property type="evidence" value="ECO:0000250"/>
    <property type="project" value="UniProtKB"/>
</dbReference>
<dbReference type="CDD" id="cd09497">
    <property type="entry name" value="SAM_caskin1_2_repeat1"/>
    <property type="match status" value="1"/>
</dbReference>
<dbReference type="CDD" id="cd09498">
    <property type="entry name" value="SAM_caskin1_2_repeat2"/>
    <property type="match status" value="1"/>
</dbReference>
<dbReference type="CDD" id="cd12063">
    <property type="entry name" value="SH3_Caskin2"/>
    <property type="match status" value="1"/>
</dbReference>
<dbReference type="FunFam" id="1.10.150.50:FF:000032">
    <property type="entry name" value="caskin-1 isoform X1"/>
    <property type="match status" value="1"/>
</dbReference>
<dbReference type="FunFam" id="1.25.40.20:FF:000053">
    <property type="entry name" value="caskin-2 isoform X1"/>
    <property type="match status" value="1"/>
</dbReference>
<dbReference type="FunFam" id="1.25.40.20:FF:000139">
    <property type="entry name" value="caskin-2 isoform X1"/>
    <property type="match status" value="1"/>
</dbReference>
<dbReference type="FunFam" id="2.30.30.40:FF:000062">
    <property type="entry name" value="caskin-2 isoform X1"/>
    <property type="match status" value="1"/>
</dbReference>
<dbReference type="FunFam" id="1.10.150.50:FF:000028">
    <property type="entry name" value="caskin-2 isoform X2"/>
    <property type="match status" value="1"/>
</dbReference>
<dbReference type="FunFam" id="1.25.40.20:FF:000042">
    <property type="entry name" value="caskin-2 isoform X2"/>
    <property type="match status" value="1"/>
</dbReference>
<dbReference type="Gene3D" id="1.25.40.20">
    <property type="entry name" value="Ankyrin repeat-containing domain"/>
    <property type="match status" value="3"/>
</dbReference>
<dbReference type="Gene3D" id="2.30.30.40">
    <property type="entry name" value="SH3 Domains"/>
    <property type="match status" value="1"/>
</dbReference>
<dbReference type="Gene3D" id="1.10.150.50">
    <property type="entry name" value="Transcription Factor, Ets-1"/>
    <property type="match status" value="2"/>
</dbReference>
<dbReference type="InterPro" id="IPR033635">
    <property type="entry name" value="ANKS1/Caskin"/>
</dbReference>
<dbReference type="InterPro" id="IPR002110">
    <property type="entry name" value="Ankyrin_rpt"/>
</dbReference>
<dbReference type="InterPro" id="IPR036770">
    <property type="entry name" value="Ankyrin_rpt-contain_sf"/>
</dbReference>
<dbReference type="InterPro" id="IPR032232">
    <property type="entry name" value="Caskin1-CID"/>
</dbReference>
<dbReference type="InterPro" id="IPR035497">
    <property type="entry name" value="Caskin1/2_SAM_1"/>
</dbReference>
<dbReference type="InterPro" id="IPR035498">
    <property type="entry name" value="Caskin1/2_SAM_2"/>
</dbReference>
<dbReference type="InterPro" id="IPR035499">
    <property type="entry name" value="Caskin2_SH3"/>
</dbReference>
<dbReference type="InterPro" id="IPR032117">
    <property type="entry name" value="Caskin_C"/>
</dbReference>
<dbReference type="InterPro" id="IPR001660">
    <property type="entry name" value="SAM"/>
</dbReference>
<dbReference type="InterPro" id="IPR013761">
    <property type="entry name" value="SAM/pointed_sf"/>
</dbReference>
<dbReference type="InterPro" id="IPR036028">
    <property type="entry name" value="SH3-like_dom_sf"/>
</dbReference>
<dbReference type="InterPro" id="IPR001452">
    <property type="entry name" value="SH3_domain"/>
</dbReference>
<dbReference type="PANTHER" id="PTHR24174">
    <property type="entry name" value="ANKYRIN REPEAT AND STERILE ALPHA MOTIF DOMAIN-CONTAINING PROTEIN 1"/>
    <property type="match status" value="1"/>
</dbReference>
<dbReference type="PANTHER" id="PTHR24174:SF18">
    <property type="entry name" value="CASKIN-2"/>
    <property type="match status" value="1"/>
</dbReference>
<dbReference type="Pfam" id="PF12796">
    <property type="entry name" value="Ank_2"/>
    <property type="match status" value="3"/>
</dbReference>
<dbReference type="Pfam" id="PF16907">
    <property type="entry name" value="Caskin-Pro-rich"/>
    <property type="match status" value="1"/>
</dbReference>
<dbReference type="Pfam" id="PF16632">
    <property type="entry name" value="Caskin-tail"/>
    <property type="match status" value="1"/>
</dbReference>
<dbReference type="Pfam" id="PF16600">
    <property type="entry name" value="Caskin1-CID"/>
    <property type="match status" value="1"/>
</dbReference>
<dbReference type="Pfam" id="PF00536">
    <property type="entry name" value="SAM_1"/>
    <property type="match status" value="2"/>
</dbReference>
<dbReference type="Pfam" id="PF07653">
    <property type="entry name" value="SH3_2"/>
    <property type="match status" value="1"/>
</dbReference>
<dbReference type="PRINTS" id="PR01415">
    <property type="entry name" value="ANKYRIN"/>
</dbReference>
<dbReference type="SMART" id="SM00248">
    <property type="entry name" value="ANK"/>
    <property type="match status" value="6"/>
</dbReference>
<dbReference type="SMART" id="SM00454">
    <property type="entry name" value="SAM"/>
    <property type="match status" value="2"/>
</dbReference>
<dbReference type="SMART" id="SM00326">
    <property type="entry name" value="SH3"/>
    <property type="match status" value="1"/>
</dbReference>
<dbReference type="SUPFAM" id="SSF48403">
    <property type="entry name" value="Ankyrin repeat"/>
    <property type="match status" value="1"/>
</dbReference>
<dbReference type="SUPFAM" id="SSF47769">
    <property type="entry name" value="SAM/Pointed domain"/>
    <property type="match status" value="2"/>
</dbReference>
<dbReference type="SUPFAM" id="SSF50044">
    <property type="entry name" value="SH3-domain"/>
    <property type="match status" value="1"/>
</dbReference>
<dbReference type="PROSITE" id="PS50297">
    <property type="entry name" value="ANK_REP_REGION"/>
    <property type="match status" value="1"/>
</dbReference>
<dbReference type="PROSITE" id="PS50088">
    <property type="entry name" value="ANK_REPEAT"/>
    <property type="match status" value="5"/>
</dbReference>
<dbReference type="PROSITE" id="PS50105">
    <property type="entry name" value="SAM_DOMAIN"/>
    <property type="match status" value="2"/>
</dbReference>
<dbReference type="PROSITE" id="PS50002">
    <property type="entry name" value="SH3"/>
    <property type="match status" value="1"/>
</dbReference>
<name>CSKI2_HUMAN</name>
<reference key="1">
    <citation type="journal article" date="2002" name="J. Neurosci.">
        <title>CASK participates in alternative tripartite complexes in which Mint 1 competes for binding with Caskin 1, a novel CASK-binding protein.</title>
        <authorList>
            <person name="Tabuchi K."/>
            <person name="Biederer T."/>
            <person name="Butz S."/>
            <person name="Suedhof T.C."/>
        </authorList>
    </citation>
    <scope>NUCLEOTIDE SEQUENCE [MRNA] (ISOFORM 1)</scope>
    <scope>VARIANT GLY-891</scope>
</reference>
<reference key="2">
    <citation type="journal article" date="2004" name="Nat. Genet.">
        <title>Complete sequencing and characterization of 21,243 full-length human cDNAs.</title>
        <authorList>
            <person name="Ota T."/>
            <person name="Suzuki Y."/>
            <person name="Nishikawa T."/>
            <person name="Otsuki T."/>
            <person name="Sugiyama T."/>
            <person name="Irie R."/>
            <person name="Wakamatsu A."/>
            <person name="Hayashi K."/>
            <person name="Sato H."/>
            <person name="Nagai K."/>
            <person name="Kimura K."/>
            <person name="Makita H."/>
            <person name="Sekine M."/>
            <person name="Obayashi M."/>
            <person name="Nishi T."/>
            <person name="Shibahara T."/>
            <person name="Tanaka T."/>
            <person name="Ishii S."/>
            <person name="Yamamoto J."/>
            <person name="Saito K."/>
            <person name="Kawai Y."/>
            <person name="Isono Y."/>
            <person name="Nakamura Y."/>
            <person name="Nagahari K."/>
            <person name="Murakami K."/>
            <person name="Yasuda T."/>
            <person name="Iwayanagi T."/>
            <person name="Wagatsuma M."/>
            <person name="Shiratori A."/>
            <person name="Sudo H."/>
            <person name="Hosoiri T."/>
            <person name="Kaku Y."/>
            <person name="Kodaira H."/>
            <person name="Kondo H."/>
            <person name="Sugawara M."/>
            <person name="Takahashi M."/>
            <person name="Kanda K."/>
            <person name="Yokoi T."/>
            <person name="Furuya T."/>
            <person name="Kikkawa E."/>
            <person name="Omura Y."/>
            <person name="Abe K."/>
            <person name="Kamihara K."/>
            <person name="Katsuta N."/>
            <person name="Sato K."/>
            <person name="Tanikawa M."/>
            <person name="Yamazaki M."/>
            <person name="Ninomiya K."/>
            <person name="Ishibashi T."/>
            <person name="Yamashita H."/>
            <person name="Murakawa K."/>
            <person name="Fujimori K."/>
            <person name="Tanai H."/>
            <person name="Kimata M."/>
            <person name="Watanabe M."/>
            <person name="Hiraoka S."/>
            <person name="Chiba Y."/>
            <person name="Ishida S."/>
            <person name="Ono Y."/>
            <person name="Takiguchi S."/>
            <person name="Watanabe S."/>
            <person name="Yosida M."/>
            <person name="Hotuta T."/>
            <person name="Kusano J."/>
            <person name="Kanehori K."/>
            <person name="Takahashi-Fujii A."/>
            <person name="Hara H."/>
            <person name="Tanase T.-O."/>
            <person name="Nomura Y."/>
            <person name="Togiya S."/>
            <person name="Komai F."/>
            <person name="Hara R."/>
            <person name="Takeuchi K."/>
            <person name="Arita M."/>
            <person name="Imose N."/>
            <person name="Musashino K."/>
            <person name="Yuuki H."/>
            <person name="Oshima A."/>
            <person name="Sasaki N."/>
            <person name="Aotsuka S."/>
            <person name="Yoshikawa Y."/>
            <person name="Matsunawa H."/>
            <person name="Ichihara T."/>
            <person name="Shiohata N."/>
            <person name="Sano S."/>
            <person name="Moriya S."/>
            <person name="Momiyama H."/>
            <person name="Satoh N."/>
            <person name="Takami S."/>
            <person name="Terashima Y."/>
            <person name="Suzuki O."/>
            <person name="Nakagawa S."/>
            <person name="Senoh A."/>
            <person name="Mizoguchi H."/>
            <person name="Goto Y."/>
            <person name="Shimizu F."/>
            <person name="Wakebe H."/>
            <person name="Hishigaki H."/>
            <person name="Watanabe T."/>
            <person name="Sugiyama A."/>
            <person name="Takemoto M."/>
            <person name="Kawakami B."/>
            <person name="Yamazaki M."/>
            <person name="Watanabe K."/>
            <person name="Kumagai A."/>
            <person name="Itakura S."/>
            <person name="Fukuzumi Y."/>
            <person name="Fujimori Y."/>
            <person name="Komiyama M."/>
            <person name="Tashiro H."/>
            <person name="Tanigami A."/>
            <person name="Fujiwara T."/>
            <person name="Ono T."/>
            <person name="Yamada K."/>
            <person name="Fujii Y."/>
            <person name="Ozaki K."/>
            <person name="Hirao M."/>
            <person name="Ohmori Y."/>
            <person name="Kawabata A."/>
            <person name="Hikiji T."/>
            <person name="Kobatake N."/>
            <person name="Inagaki H."/>
            <person name="Ikema Y."/>
            <person name="Okamoto S."/>
            <person name="Okitani R."/>
            <person name="Kawakami T."/>
            <person name="Noguchi S."/>
            <person name="Itoh T."/>
            <person name="Shigeta K."/>
            <person name="Senba T."/>
            <person name="Matsumura K."/>
            <person name="Nakajima Y."/>
            <person name="Mizuno T."/>
            <person name="Morinaga M."/>
            <person name="Sasaki M."/>
            <person name="Togashi T."/>
            <person name="Oyama M."/>
            <person name="Hata H."/>
            <person name="Watanabe M."/>
            <person name="Komatsu T."/>
            <person name="Mizushima-Sugano J."/>
            <person name="Satoh T."/>
            <person name="Shirai Y."/>
            <person name="Takahashi Y."/>
            <person name="Nakagawa K."/>
            <person name="Okumura K."/>
            <person name="Nagase T."/>
            <person name="Nomura N."/>
            <person name="Kikuchi H."/>
            <person name="Masuho Y."/>
            <person name="Yamashita R."/>
            <person name="Nakai K."/>
            <person name="Yada T."/>
            <person name="Nakamura Y."/>
            <person name="Ohara O."/>
            <person name="Isogai T."/>
            <person name="Sugano S."/>
        </authorList>
    </citation>
    <scope>NUCLEOTIDE SEQUENCE [LARGE SCALE MRNA] (ISOFORM 2)</scope>
    <scope>VARIANT GLY-891</scope>
    <source>
        <tissue>Placenta</tissue>
    </source>
</reference>
<reference key="3">
    <citation type="journal article" date="2006" name="Nature">
        <title>DNA sequence of human chromosome 17 and analysis of rearrangement in the human lineage.</title>
        <authorList>
            <person name="Zody M.C."/>
            <person name="Garber M."/>
            <person name="Adams D.J."/>
            <person name="Sharpe T."/>
            <person name="Harrow J."/>
            <person name="Lupski J.R."/>
            <person name="Nicholson C."/>
            <person name="Searle S.M."/>
            <person name="Wilming L."/>
            <person name="Young S.K."/>
            <person name="Abouelleil A."/>
            <person name="Allen N.R."/>
            <person name="Bi W."/>
            <person name="Bloom T."/>
            <person name="Borowsky M.L."/>
            <person name="Bugalter B.E."/>
            <person name="Butler J."/>
            <person name="Chang J.L."/>
            <person name="Chen C.-K."/>
            <person name="Cook A."/>
            <person name="Corum B."/>
            <person name="Cuomo C.A."/>
            <person name="de Jong P.J."/>
            <person name="DeCaprio D."/>
            <person name="Dewar K."/>
            <person name="FitzGerald M."/>
            <person name="Gilbert J."/>
            <person name="Gibson R."/>
            <person name="Gnerre S."/>
            <person name="Goldstein S."/>
            <person name="Grafham D.V."/>
            <person name="Grocock R."/>
            <person name="Hafez N."/>
            <person name="Hagopian D.S."/>
            <person name="Hart E."/>
            <person name="Norman C.H."/>
            <person name="Humphray S."/>
            <person name="Jaffe D.B."/>
            <person name="Jones M."/>
            <person name="Kamal M."/>
            <person name="Khodiyar V.K."/>
            <person name="LaButti K."/>
            <person name="Laird G."/>
            <person name="Lehoczky J."/>
            <person name="Liu X."/>
            <person name="Lokyitsang T."/>
            <person name="Loveland J."/>
            <person name="Lui A."/>
            <person name="Macdonald P."/>
            <person name="Major J.E."/>
            <person name="Matthews L."/>
            <person name="Mauceli E."/>
            <person name="McCarroll S.A."/>
            <person name="Mihalev A.H."/>
            <person name="Mudge J."/>
            <person name="Nguyen C."/>
            <person name="Nicol R."/>
            <person name="O'Leary S.B."/>
            <person name="Osoegawa K."/>
            <person name="Schwartz D.C."/>
            <person name="Shaw-Smith C."/>
            <person name="Stankiewicz P."/>
            <person name="Steward C."/>
            <person name="Swarbreck D."/>
            <person name="Venkataraman V."/>
            <person name="Whittaker C.A."/>
            <person name="Yang X."/>
            <person name="Zimmer A.R."/>
            <person name="Bradley A."/>
            <person name="Hubbard T."/>
            <person name="Birren B.W."/>
            <person name="Rogers J."/>
            <person name="Lander E.S."/>
            <person name="Nusbaum C."/>
        </authorList>
    </citation>
    <scope>NUCLEOTIDE SEQUENCE [LARGE SCALE GENOMIC DNA]</scope>
</reference>
<reference key="4">
    <citation type="journal article" date="2004" name="Genome Res.">
        <title>The status, quality, and expansion of the NIH full-length cDNA project: the Mammalian Gene Collection (MGC).</title>
        <authorList>
            <consortium name="The MGC Project Team"/>
        </authorList>
    </citation>
    <scope>NUCLEOTIDE SEQUENCE [LARGE SCALE MRNA] (ISOFORM 1)</scope>
    <scope>VARIANT GLY-891</scope>
    <source>
        <tissue>Testis</tissue>
    </source>
</reference>
<reference key="5">
    <citation type="journal article" date="1999" name="DNA Res.">
        <title>Characterization of cDNA clones selected by the GeneMark analysis from size-fractionated cDNA libraries from human brain.</title>
        <authorList>
            <person name="Hirosawa M."/>
            <person name="Nagase T."/>
            <person name="Ishikawa K."/>
            <person name="Kikuno R."/>
            <person name="Nomura N."/>
            <person name="Ohara O."/>
        </authorList>
    </citation>
    <scope>NUCLEOTIDE SEQUENCE [LARGE SCALE MRNA] OF 79-1202 (ISOFORM 1)</scope>
    <scope>VARIANT GLY-891</scope>
    <source>
        <tissue>Brain</tissue>
    </source>
</reference>
<reference key="6">
    <citation type="journal article" date="2008" name="Proc. Natl. Acad. Sci. U.S.A.">
        <title>A quantitative atlas of mitotic phosphorylation.</title>
        <authorList>
            <person name="Dephoure N."/>
            <person name="Zhou C."/>
            <person name="Villen J."/>
            <person name="Beausoleil S.A."/>
            <person name="Bakalarski C.E."/>
            <person name="Elledge S.J."/>
            <person name="Gygi S.P."/>
        </authorList>
    </citation>
    <scope>PHOSPHORYLATION [LARGE SCALE ANALYSIS] AT SER-393; SER-396; SER-471; SER-858 AND SER-892</scope>
    <scope>VARIANT [LARGE SCALE ANALYSIS] GLY-891</scope>
    <scope>IDENTIFICATION BY MASS SPECTROMETRY [LARGE SCALE ANALYSIS]</scope>
    <source>
        <tissue>Cervix carcinoma</tissue>
    </source>
</reference>
<reference key="7">
    <citation type="journal article" date="2009" name="Sci. Signal.">
        <title>Quantitative phosphoproteomic analysis of T cell receptor signaling reveals system-wide modulation of protein-protein interactions.</title>
        <authorList>
            <person name="Mayya V."/>
            <person name="Lundgren D.H."/>
            <person name="Hwang S.-I."/>
            <person name="Rezaul K."/>
            <person name="Wu L."/>
            <person name="Eng J.K."/>
            <person name="Rodionov V."/>
            <person name="Han D.K."/>
        </authorList>
    </citation>
    <scope>PHOSPHORYLATION [LARGE SCALE ANALYSIS] AT SER-396 AND SER-471</scope>
    <scope>IDENTIFICATION BY MASS SPECTROMETRY [LARGE SCALE ANALYSIS]</scope>
    <source>
        <tissue>Leukemic T-cell</tissue>
    </source>
</reference>
<reference key="8">
    <citation type="journal article" date="2010" name="Sci. Signal.">
        <title>Quantitative phosphoproteomics reveals widespread full phosphorylation site occupancy during mitosis.</title>
        <authorList>
            <person name="Olsen J.V."/>
            <person name="Vermeulen M."/>
            <person name="Santamaria A."/>
            <person name="Kumar C."/>
            <person name="Miller M.L."/>
            <person name="Jensen L.J."/>
            <person name="Gnad F."/>
            <person name="Cox J."/>
            <person name="Jensen T.S."/>
            <person name="Nigg E.A."/>
            <person name="Brunak S."/>
            <person name="Mann M."/>
        </authorList>
    </citation>
    <scope>PHOSPHORYLATION [LARGE SCALE ANALYSIS] AT SER-393 AND SER-396</scope>
    <scope>IDENTIFICATION BY MASS SPECTROMETRY [LARGE SCALE ANALYSIS]</scope>
    <source>
        <tissue>Cervix carcinoma</tissue>
    </source>
</reference>
<reference key="9">
    <citation type="journal article" date="2013" name="J. Proteome Res.">
        <title>Toward a comprehensive characterization of a human cancer cell phosphoproteome.</title>
        <authorList>
            <person name="Zhou H."/>
            <person name="Di Palma S."/>
            <person name="Preisinger C."/>
            <person name="Peng M."/>
            <person name="Polat A.N."/>
            <person name="Heck A.J."/>
            <person name="Mohammed S."/>
        </authorList>
    </citation>
    <scope>PHOSPHORYLATION [LARGE SCALE ANALYSIS] AT TYR-253; SER-358; SER-393; SER-396; SER-471; SER-725; SER-858; SER-878 AND SER-892</scope>
    <scope>VARIANT [LARGE SCALE ANALYSIS] GLY-891</scope>
    <scope>IDENTIFICATION BY MASS SPECTROMETRY [LARGE SCALE ANALYSIS]</scope>
    <source>
        <tissue>Cervix carcinoma</tissue>
        <tissue>Erythroleukemia</tissue>
    </source>
</reference>
<reference key="10">
    <citation type="journal article" date="2014" name="J. Proteomics">
        <title>An enzyme assisted RP-RPLC approach for in-depth analysis of human liver phosphoproteome.</title>
        <authorList>
            <person name="Bian Y."/>
            <person name="Song C."/>
            <person name="Cheng K."/>
            <person name="Dong M."/>
            <person name="Wang F."/>
            <person name="Huang J."/>
            <person name="Sun D."/>
            <person name="Wang L."/>
            <person name="Ye M."/>
            <person name="Zou H."/>
        </authorList>
    </citation>
    <scope>PHOSPHORYLATION [LARGE SCALE ANALYSIS] AT SER-403 AND SER-406</scope>
    <scope>IDENTIFICATION BY MASS SPECTROMETRY [LARGE SCALE ANALYSIS]</scope>
    <source>
        <tissue>Liver</tissue>
    </source>
</reference>
<reference key="11">
    <citation type="journal article" date="2011" name="J. Bioinform. Comput. Biol.">
        <title>Error tolerant NMR backbone resonance assignment and automated structure generation.</title>
        <authorList>
            <person name="Alipanahi B."/>
            <person name="Gao X."/>
            <person name="Karakoc E."/>
            <person name="Li S.C."/>
            <person name="Balbach F."/>
            <person name="Feng G."/>
            <person name="Donaldson L."/>
            <person name="Li M."/>
        </authorList>
    </citation>
    <scope>STRUCTURE BY NMR OF 284-348</scope>
</reference>
<gene>
    <name type="primary">CASKIN2</name>
    <name type="synonym">KIAA1139</name>
</gene>
<protein>
    <recommendedName>
        <fullName>Caskin-2</fullName>
    </recommendedName>
    <alternativeName>
        <fullName>CASK-interacting protein 2</fullName>
    </alternativeName>
</protein>
<organism>
    <name type="scientific">Homo sapiens</name>
    <name type="common">Human</name>
    <dbReference type="NCBI Taxonomy" id="9606"/>
    <lineage>
        <taxon>Eukaryota</taxon>
        <taxon>Metazoa</taxon>
        <taxon>Chordata</taxon>
        <taxon>Craniata</taxon>
        <taxon>Vertebrata</taxon>
        <taxon>Euteleostomi</taxon>
        <taxon>Mammalia</taxon>
        <taxon>Eutheria</taxon>
        <taxon>Euarchontoglires</taxon>
        <taxon>Primates</taxon>
        <taxon>Haplorrhini</taxon>
        <taxon>Catarrhini</taxon>
        <taxon>Hominidae</taxon>
        <taxon>Homo</taxon>
    </lineage>
</organism>
<comment type="subunit">
    <text>May not bind CASK.</text>
</comment>
<comment type="subcellular location">
    <subcellularLocation>
        <location evidence="1">Cytoplasm</location>
    </subcellularLocation>
</comment>
<comment type="alternative products">
    <event type="alternative splicing"/>
    <isoform>
        <id>Q8WXE0-1</id>
        <name>1</name>
        <sequence type="displayed"/>
    </isoform>
    <isoform>
        <id>Q8WXE0-2</id>
        <name>2</name>
        <sequence type="described" ref="VSP_040568"/>
    </isoform>
</comment>
<accession>Q8WXE0</accession>
<accession>B4DTT3</accession>
<accession>B7Z9H1</accession>
<accession>Q7LG69</accession>
<accession>Q9ULT1</accession>
<proteinExistence type="evidence at protein level"/>
<evidence type="ECO:0000250" key="1"/>
<evidence type="ECO:0000250" key="2">
    <source>
        <dbReference type="UniProtKB" id="Q8VHK1"/>
    </source>
</evidence>
<evidence type="ECO:0000255" key="3">
    <source>
        <dbReference type="PROSITE-ProRule" id="PRU00184"/>
    </source>
</evidence>
<evidence type="ECO:0000255" key="4">
    <source>
        <dbReference type="PROSITE-ProRule" id="PRU00192"/>
    </source>
</evidence>
<evidence type="ECO:0000256" key="5">
    <source>
        <dbReference type="SAM" id="MobiDB-lite"/>
    </source>
</evidence>
<evidence type="ECO:0000269" key="6">
    <source>
    </source>
</evidence>
<evidence type="ECO:0000269" key="7">
    <source>
    </source>
</evidence>
<evidence type="ECO:0000269" key="8">
    <source>
    </source>
</evidence>
<evidence type="ECO:0000269" key="9">
    <source>
    </source>
</evidence>
<evidence type="ECO:0000303" key="10">
    <source>
    </source>
</evidence>
<evidence type="ECO:0000305" key="11"/>
<evidence type="ECO:0007744" key="12">
    <source>
    </source>
</evidence>
<evidence type="ECO:0007744" key="13">
    <source>
    </source>
</evidence>
<evidence type="ECO:0007744" key="14">
    <source>
    </source>
</evidence>
<evidence type="ECO:0007744" key="15">
    <source>
    </source>
</evidence>
<evidence type="ECO:0007744" key="16">
    <source>
    </source>
</evidence>
<evidence type="ECO:0007829" key="17">
    <source>
        <dbReference type="PDB" id="2KE9"/>
    </source>
</evidence>
<evidence type="ECO:0007829" key="18">
    <source>
        <dbReference type="PDB" id="4IS7"/>
    </source>
</evidence>
<evidence type="ECO:0007829" key="19">
    <source>
        <dbReference type="PDB" id="5L1M"/>
    </source>
</evidence>
<evidence type="ECO:0007829" key="20">
    <source>
        <dbReference type="PDB" id="7ZW4"/>
    </source>
</evidence>
<keyword id="KW-0002">3D-structure</keyword>
<keyword id="KW-0025">Alternative splicing</keyword>
<keyword id="KW-0040">ANK repeat</keyword>
<keyword id="KW-0963">Cytoplasm</keyword>
<keyword id="KW-0597">Phosphoprotein</keyword>
<keyword id="KW-1267">Proteomics identification</keyword>
<keyword id="KW-1185">Reference proteome</keyword>
<keyword id="KW-0677">Repeat</keyword>
<keyword id="KW-0728">SH3 domain</keyword>
<sequence>MGREQDLILAVKNGDVTGVQKLVAKVKATKTKLLGSTKRLNVNYQDADGFSALHHAALGGSLELIALLLEAQATVDIKDSNGMRPLHYAAWQGRLEPVRLLLRASAAVNAASLDGQIPLHLAAQYGHYEVSEMLLQHQSNPCLVNKAKKTPLDLACEFGRLKVAQLLLNSHLCVALLEGEAKDPCDPNYTTPLHLAAKNGHREVIRQLLRAGIEINRQTKTGTALHEAALYGKTEVVRLLLEGGVDVNIRNTYNQTALDIVNQFTTSQASREIKQLLREASGILKVRALKDFWNLHDPTALNVRAGDVITVLEQHPDGRWKGHIHESQRGTDRIGYFPPGIVEVVSKRVGIPAARLPSAPTPLRPGFSRTPQPPAEEPPHPLTYSQLPRVGLSPDSPAGDRNSVGSEGSVGSIRSAGSGQSSEGTNGHGPGLLIENAQPLPSAGEDQVLPGLHPPSLADNLSHRPLANCRSGEQIFTQDVRPEQLLEGKDAQAIHNWLSEFQLEGYTAHFLQAGYDVPTISRMTPEDLTAIGVTKPGHRKKIASEIAQLSIAEWLPSYIPTDLLEWLCALGLPQYHKQLVSSGYDSMGLVADLTWEELQEIGVNKLGHQKKLMLGVKRLAELRRGLLQGEALSEGGRRLAKGPELMAIEGLENGEGPATAGPRLLTFQGSELSPELQAAMAGGGPEPLPLPPARSPSQESIGARSRGSGHSQEQPAPQPSGGDPSPPQERNLPEGTERPPKLCSSLPGQGPPPYVFMYPQGSPSSPAPGPPPGAPWAFSYLAGPPATPPDPPRPKRRSHSLSRPGPTEGDAEGEAEGPVGSTLGSYATLTRRPGRSALVRTSPSVTPTPARGTPRSQSFALRARRKGPPPPPPKRLSSVSGPSPEPPPLDESPGPKEGATGPRRRTLSEPAGPSEPPGPPAPAGPASDTEEEEPGPEGTPPSRGSSGEGLPFAEEGNLTIKQRPKPAGPPPRETPVPPGLDFNLTESDTVKRRPKCREREPLQTALLAFGVASATPGPAAPLPSPTPGESPPASSLPQPEPSSLPAQGVPTPLAPSPAMQPPVPPCPGPGLESSAASRWNGETEPPAAPAALLKVPGAGTAPKPVSVACTQLAFSGPKLAPRLGPRPVPPPRPESTGTVGPGQAQQRLEQTSSSLAAALRAAEKSIGTKEQEGTPSASTKHILDDISTMFDALADQLDAMLD</sequence>